<protein>
    <recommendedName>
        <fullName evidence="1">L-threonine 3-dehydrogenase</fullName>
        <shortName evidence="1">TDH</shortName>
        <ecNumber evidence="1">1.1.1.103</ecNumber>
    </recommendedName>
</protein>
<evidence type="ECO:0000255" key="1">
    <source>
        <dbReference type="HAMAP-Rule" id="MF_00627"/>
    </source>
</evidence>
<accession>Q6DAT5</accession>
<keyword id="KW-0963">Cytoplasm</keyword>
<keyword id="KW-0479">Metal-binding</keyword>
<keyword id="KW-0520">NAD</keyword>
<keyword id="KW-0560">Oxidoreductase</keyword>
<keyword id="KW-1185">Reference proteome</keyword>
<keyword id="KW-0862">Zinc</keyword>
<name>TDH_PECAS</name>
<comment type="function">
    <text evidence="1">Catalyzes the NAD(+)-dependent oxidation of L-threonine to 2-amino-3-ketobutyrate.</text>
</comment>
<comment type="catalytic activity">
    <reaction evidence="1">
        <text>L-threonine + NAD(+) = (2S)-2-amino-3-oxobutanoate + NADH + H(+)</text>
        <dbReference type="Rhea" id="RHEA:13161"/>
        <dbReference type="ChEBI" id="CHEBI:15378"/>
        <dbReference type="ChEBI" id="CHEBI:57540"/>
        <dbReference type="ChEBI" id="CHEBI:57926"/>
        <dbReference type="ChEBI" id="CHEBI:57945"/>
        <dbReference type="ChEBI" id="CHEBI:78948"/>
        <dbReference type="EC" id="1.1.1.103"/>
    </reaction>
</comment>
<comment type="cofactor">
    <cofactor evidence="1">
        <name>Zn(2+)</name>
        <dbReference type="ChEBI" id="CHEBI:29105"/>
    </cofactor>
    <text evidence="1">Binds 2 Zn(2+) ions per subunit.</text>
</comment>
<comment type="pathway">
    <text evidence="1">Amino-acid degradation; L-threonine degradation via oxydo-reductase pathway; glycine from L-threonine: step 1/2.</text>
</comment>
<comment type="subunit">
    <text evidence="1">Homotetramer.</text>
</comment>
<comment type="subcellular location">
    <subcellularLocation>
        <location evidence="1">Cytoplasm</location>
    </subcellularLocation>
</comment>
<comment type="similarity">
    <text evidence="1">Belongs to the zinc-containing alcohol dehydrogenase family.</text>
</comment>
<feature type="chain" id="PRO_0000160840" description="L-threonine 3-dehydrogenase">
    <location>
        <begin position="1"/>
        <end position="361"/>
    </location>
</feature>
<feature type="active site" description="Charge relay system" evidence="1">
    <location>
        <position position="40"/>
    </location>
</feature>
<feature type="active site" description="Charge relay system" evidence="1">
    <location>
        <position position="43"/>
    </location>
</feature>
<feature type="binding site" evidence="1">
    <location>
        <position position="38"/>
    </location>
    <ligand>
        <name>Zn(2+)</name>
        <dbReference type="ChEBI" id="CHEBI:29105"/>
        <label>1</label>
        <note>catalytic</note>
    </ligand>
</feature>
<feature type="binding site" evidence="1">
    <location>
        <position position="63"/>
    </location>
    <ligand>
        <name>Zn(2+)</name>
        <dbReference type="ChEBI" id="CHEBI:29105"/>
        <label>1</label>
        <note>catalytic</note>
    </ligand>
</feature>
<feature type="binding site" evidence="1">
    <location>
        <position position="64"/>
    </location>
    <ligand>
        <name>Zn(2+)</name>
        <dbReference type="ChEBI" id="CHEBI:29105"/>
        <label>1</label>
        <note>catalytic</note>
    </ligand>
</feature>
<feature type="binding site" evidence="1">
    <location>
        <position position="93"/>
    </location>
    <ligand>
        <name>Zn(2+)</name>
        <dbReference type="ChEBI" id="CHEBI:29105"/>
        <label>2</label>
    </ligand>
</feature>
<feature type="binding site" evidence="1">
    <location>
        <position position="96"/>
    </location>
    <ligand>
        <name>Zn(2+)</name>
        <dbReference type="ChEBI" id="CHEBI:29105"/>
        <label>2</label>
    </ligand>
</feature>
<feature type="binding site" evidence="1">
    <location>
        <position position="99"/>
    </location>
    <ligand>
        <name>Zn(2+)</name>
        <dbReference type="ChEBI" id="CHEBI:29105"/>
        <label>2</label>
    </ligand>
</feature>
<feature type="binding site" evidence="1">
    <location>
        <position position="107"/>
    </location>
    <ligand>
        <name>Zn(2+)</name>
        <dbReference type="ChEBI" id="CHEBI:29105"/>
        <label>2</label>
    </ligand>
</feature>
<feature type="binding site" evidence="1">
    <location>
        <position position="175"/>
    </location>
    <ligand>
        <name>NAD(+)</name>
        <dbReference type="ChEBI" id="CHEBI:57540"/>
    </ligand>
</feature>
<feature type="binding site" evidence="1">
    <location>
        <position position="195"/>
    </location>
    <ligand>
        <name>NAD(+)</name>
        <dbReference type="ChEBI" id="CHEBI:57540"/>
    </ligand>
</feature>
<feature type="binding site" evidence="1">
    <location>
        <position position="200"/>
    </location>
    <ligand>
        <name>NAD(+)</name>
        <dbReference type="ChEBI" id="CHEBI:57540"/>
    </ligand>
</feature>
<feature type="binding site" evidence="1">
    <location>
        <begin position="262"/>
        <end position="264"/>
    </location>
    <ligand>
        <name>NAD(+)</name>
        <dbReference type="ChEBI" id="CHEBI:57540"/>
    </ligand>
</feature>
<feature type="binding site" evidence="1">
    <location>
        <begin position="286"/>
        <end position="287"/>
    </location>
    <ligand>
        <name>NAD(+)</name>
        <dbReference type="ChEBI" id="CHEBI:57540"/>
    </ligand>
</feature>
<feature type="site" description="Important for catalytic activity for the proton relay mechanism but does not participate directly in the coordination of zinc atom" evidence="1">
    <location>
        <position position="148"/>
    </location>
</feature>
<organism>
    <name type="scientific">Pectobacterium atrosepticum (strain SCRI 1043 / ATCC BAA-672)</name>
    <name type="common">Erwinia carotovora subsp. atroseptica</name>
    <dbReference type="NCBI Taxonomy" id="218491"/>
    <lineage>
        <taxon>Bacteria</taxon>
        <taxon>Pseudomonadati</taxon>
        <taxon>Pseudomonadota</taxon>
        <taxon>Gammaproteobacteria</taxon>
        <taxon>Enterobacterales</taxon>
        <taxon>Pectobacteriaceae</taxon>
        <taxon>Pectobacterium</taxon>
    </lineage>
</organism>
<proteinExistence type="inferred from homology"/>
<dbReference type="EC" id="1.1.1.103" evidence="1"/>
<dbReference type="EMBL" id="BX950851">
    <property type="protein sequence ID" value="CAG73087.1"/>
    <property type="molecule type" value="Genomic_DNA"/>
</dbReference>
<dbReference type="RefSeq" id="WP_011091807.1">
    <property type="nucleotide sequence ID" value="NC_004547.2"/>
</dbReference>
<dbReference type="SMR" id="Q6DAT5"/>
<dbReference type="STRING" id="218491.ECA0168"/>
<dbReference type="KEGG" id="eca:ECA0168"/>
<dbReference type="PATRIC" id="fig|218491.5.peg.168"/>
<dbReference type="eggNOG" id="COG1063">
    <property type="taxonomic scope" value="Bacteria"/>
</dbReference>
<dbReference type="HOGENOM" id="CLU_026673_11_0_6"/>
<dbReference type="OrthoDB" id="9773078at2"/>
<dbReference type="UniPathway" id="UPA00046">
    <property type="reaction ID" value="UER00505"/>
</dbReference>
<dbReference type="Proteomes" id="UP000007966">
    <property type="component" value="Chromosome"/>
</dbReference>
<dbReference type="GO" id="GO:0005737">
    <property type="term" value="C:cytoplasm"/>
    <property type="evidence" value="ECO:0007669"/>
    <property type="project" value="UniProtKB-SubCell"/>
</dbReference>
<dbReference type="GO" id="GO:0008743">
    <property type="term" value="F:L-threonine 3-dehydrogenase activity"/>
    <property type="evidence" value="ECO:0007669"/>
    <property type="project" value="UniProtKB-UniRule"/>
</dbReference>
<dbReference type="GO" id="GO:0008270">
    <property type="term" value="F:zinc ion binding"/>
    <property type="evidence" value="ECO:0007669"/>
    <property type="project" value="UniProtKB-UniRule"/>
</dbReference>
<dbReference type="GO" id="GO:0019518">
    <property type="term" value="P:L-threonine catabolic process to glycine"/>
    <property type="evidence" value="ECO:0007669"/>
    <property type="project" value="UniProtKB-UniPathway"/>
</dbReference>
<dbReference type="Gene3D" id="3.90.180.10">
    <property type="entry name" value="Medium-chain alcohol dehydrogenases, catalytic domain"/>
    <property type="match status" value="1"/>
</dbReference>
<dbReference type="Gene3D" id="3.40.50.720">
    <property type="entry name" value="NAD(P)-binding Rossmann-like Domain"/>
    <property type="match status" value="1"/>
</dbReference>
<dbReference type="HAMAP" id="MF_00627">
    <property type="entry name" value="Thr_dehydrog"/>
    <property type="match status" value="1"/>
</dbReference>
<dbReference type="InterPro" id="IPR013149">
    <property type="entry name" value="ADH-like_C"/>
</dbReference>
<dbReference type="InterPro" id="IPR013154">
    <property type="entry name" value="ADH-like_N"/>
</dbReference>
<dbReference type="InterPro" id="IPR002328">
    <property type="entry name" value="ADH_Zn_CS"/>
</dbReference>
<dbReference type="InterPro" id="IPR011032">
    <property type="entry name" value="GroES-like_sf"/>
</dbReference>
<dbReference type="InterPro" id="IPR004627">
    <property type="entry name" value="L-Threonine_3-DHase"/>
</dbReference>
<dbReference type="InterPro" id="IPR036291">
    <property type="entry name" value="NAD(P)-bd_dom_sf"/>
</dbReference>
<dbReference type="InterPro" id="IPR020843">
    <property type="entry name" value="PKS_ER"/>
</dbReference>
<dbReference type="InterPro" id="IPR050129">
    <property type="entry name" value="Zn_alcohol_dh"/>
</dbReference>
<dbReference type="NCBIfam" id="NF003808">
    <property type="entry name" value="PRK05396.1"/>
    <property type="match status" value="1"/>
</dbReference>
<dbReference type="NCBIfam" id="TIGR00692">
    <property type="entry name" value="tdh"/>
    <property type="match status" value="1"/>
</dbReference>
<dbReference type="PANTHER" id="PTHR43401">
    <property type="entry name" value="L-THREONINE 3-DEHYDROGENASE"/>
    <property type="match status" value="1"/>
</dbReference>
<dbReference type="PANTHER" id="PTHR43401:SF2">
    <property type="entry name" value="L-THREONINE 3-DEHYDROGENASE"/>
    <property type="match status" value="1"/>
</dbReference>
<dbReference type="Pfam" id="PF08240">
    <property type="entry name" value="ADH_N"/>
    <property type="match status" value="1"/>
</dbReference>
<dbReference type="Pfam" id="PF00107">
    <property type="entry name" value="ADH_zinc_N"/>
    <property type="match status" value="1"/>
</dbReference>
<dbReference type="SMART" id="SM00829">
    <property type="entry name" value="PKS_ER"/>
    <property type="match status" value="1"/>
</dbReference>
<dbReference type="SUPFAM" id="SSF50129">
    <property type="entry name" value="GroES-like"/>
    <property type="match status" value="1"/>
</dbReference>
<dbReference type="SUPFAM" id="SSF51735">
    <property type="entry name" value="NAD(P)-binding Rossmann-fold domains"/>
    <property type="match status" value="1"/>
</dbReference>
<dbReference type="PROSITE" id="PS00059">
    <property type="entry name" value="ADH_ZINC"/>
    <property type="match status" value="1"/>
</dbReference>
<sequence>MKALAKLRPEEGIWMMDAPMPELGHNDIMIKIRKSAICGTDVHIYNWDEWSQKTIPVPMVVGHEYVGEIVAIGQEVNGFHIGDRVSGEGHITCGYCRNCRAGRRHLCRNAIGVGVNRPGSFAEYLVIPAYNAFRIPDNISDELAAIFDPFGNAVHTALSFDLVGEDVLITGAGPIGMMAAAVCRHVGARNVVITDVNAYRLELASKMGATRAVNVAEEKLTDVMIELGMTEGFDIGLEMSGAPSAFRAMLKAMNHGGRIAMLGIPHEPMSIDWGEVIFKGLFIKGIYGREMFETWYKMSALIQSGLDLSPIITHRFHIDEFQKGFDAMRSGQSGKVILNWDEAYTRHTSSCMCVDCATRHT</sequence>
<reference key="1">
    <citation type="journal article" date="2004" name="Proc. Natl. Acad. Sci. U.S.A.">
        <title>Genome sequence of the enterobacterial phytopathogen Erwinia carotovora subsp. atroseptica and characterization of virulence factors.</title>
        <authorList>
            <person name="Bell K.S."/>
            <person name="Sebaihia M."/>
            <person name="Pritchard L."/>
            <person name="Holden M.T.G."/>
            <person name="Hyman L.J."/>
            <person name="Holeva M.C."/>
            <person name="Thomson N.R."/>
            <person name="Bentley S.D."/>
            <person name="Churcher L.J.C."/>
            <person name="Mungall K."/>
            <person name="Atkin R."/>
            <person name="Bason N."/>
            <person name="Brooks K."/>
            <person name="Chillingworth T."/>
            <person name="Clark K."/>
            <person name="Doggett J."/>
            <person name="Fraser A."/>
            <person name="Hance Z."/>
            <person name="Hauser H."/>
            <person name="Jagels K."/>
            <person name="Moule S."/>
            <person name="Norbertczak H."/>
            <person name="Ormond D."/>
            <person name="Price C."/>
            <person name="Quail M.A."/>
            <person name="Sanders M."/>
            <person name="Walker D."/>
            <person name="Whitehead S."/>
            <person name="Salmond G.P.C."/>
            <person name="Birch P.R.J."/>
            <person name="Parkhill J."/>
            <person name="Toth I.K."/>
        </authorList>
    </citation>
    <scope>NUCLEOTIDE SEQUENCE [LARGE SCALE GENOMIC DNA]</scope>
    <source>
        <strain>SCRI 1043 / ATCC BAA-672</strain>
    </source>
</reference>
<gene>
    <name evidence="1" type="primary">tdh</name>
    <name type="ordered locus">ECA0168</name>
</gene>